<protein>
    <recommendedName>
        <fullName>tRNA (adenine(58)-N(1))-methyltransferase non-catalytic subunit TRM6</fullName>
    </recommendedName>
    <alternativeName>
        <fullName>tRNA(m1A58)-methyltransferase subunit TRM6</fullName>
        <shortName>tRNA(m1A58)MTase subunit TRM6</shortName>
    </alternativeName>
</protein>
<keyword id="KW-0539">Nucleus</keyword>
<keyword id="KW-1185">Reference proteome</keyword>
<keyword id="KW-0694">RNA-binding</keyword>
<keyword id="KW-0819">tRNA processing</keyword>
<sequence>MTKHSGIDPLTQISPNQHVLIRLPSDNLKIVELKANAIVSLGKFGAFRVNEIIGYRFGTTFDIVYDGVEEEFVKGTQTMIGKISVLENRLKASSPALENSSENNRGLINLGSVVQEMSMAEIEAMKREAASGDAIISKMIESHKSFHQKTVHSQEKYLKRKKQKFAKFFTVEYLDSSGLLHYLIEKGDVLRVMDISQESLGMALNLANINSNGQYLCIDETGGLIVYAMLERMFAGDSNSKANGKIVVVHENEHPNLDLLKFSSYSDNFIQRHVKTISVLDFFEPAKEADIKSLFKPLSAEEINDLKSNKKSAYFRRLKWYHNQLSNIEVAASSFDGLLVASTLYLPTLIPRLGEKIHGSRPIVCYSQYKEPLLELSHSLYENLNYLAPSLLETRCRPYQTVRGKLHPLMTMKGGGGYLMWCHRVLPAAEPKLHQETLEKSEIKNSDEEGDEDAHKLDQEKQVIKRRKPNEDNEKL</sequence>
<evidence type="ECO:0000250" key="1">
    <source>
        <dbReference type="UniProtKB" id="P41814"/>
    </source>
</evidence>
<evidence type="ECO:0000256" key="2">
    <source>
        <dbReference type="SAM" id="MobiDB-lite"/>
    </source>
</evidence>
<evidence type="ECO:0000305" key="3"/>
<reference key="1">
    <citation type="journal article" date="2004" name="Nature">
        <title>Genome evolution in yeasts.</title>
        <authorList>
            <person name="Dujon B."/>
            <person name="Sherman D."/>
            <person name="Fischer G."/>
            <person name="Durrens P."/>
            <person name="Casaregola S."/>
            <person name="Lafontaine I."/>
            <person name="de Montigny J."/>
            <person name="Marck C."/>
            <person name="Neuveglise C."/>
            <person name="Talla E."/>
            <person name="Goffard N."/>
            <person name="Frangeul L."/>
            <person name="Aigle M."/>
            <person name="Anthouard V."/>
            <person name="Babour A."/>
            <person name="Barbe V."/>
            <person name="Barnay S."/>
            <person name="Blanchin S."/>
            <person name="Beckerich J.-M."/>
            <person name="Beyne E."/>
            <person name="Bleykasten C."/>
            <person name="Boisrame A."/>
            <person name="Boyer J."/>
            <person name="Cattolico L."/>
            <person name="Confanioleri F."/>
            <person name="de Daruvar A."/>
            <person name="Despons L."/>
            <person name="Fabre E."/>
            <person name="Fairhead C."/>
            <person name="Ferry-Dumazet H."/>
            <person name="Groppi A."/>
            <person name="Hantraye F."/>
            <person name="Hennequin C."/>
            <person name="Jauniaux N."/>
            <person name="Joyet P."/>
            <person name="Kachouri R."/>
            <person name="Kerrest A."/>
            <person name="Koszul R."/>
            <person name="Lemaire M."/>
            <person name="Lesur I."/>
            <person name="Ma L."/>
            <person name="Muller H."/>
            <person name="Nicaud J.-M."/>
            <person name="Nikolski M."/>
            <person name="Oztas S."/>
            <person name="Ozier-Kalogeropoulos O."/>
            <person name="Pellenz S."/>
            <person name="Potier S."/>
            <person name="Richard G.-F."/>
            <person name="Straub M.-L."/>
            <person name="Suleau A."/>
            <person name="Swennen D."/>
            <person name="Tekaia F."/>
            <person name="Wesolowski-Louvel M."/>
            <person name="Westhof E."/>
            <person name="Wirth B."/>
            <person name="Zeniou-Meyer M."/>
            <person name="Zivanovic Y."/>
            <person name="Bolotin-Fukuhara M."/>
            <person name="Thierry A."/>
            <person name="Bouchier C."/>
            <person name="Caudron B."/>
            <person name="Scarpelli C."/>
            <person name="Gaillardin C."/>
            <person name="Weissenbach J."/>
            <person name="Wincker P."/>
            <person name="Souciet J.-L."/>
        </authorList>
    </citation>
    <scope>NUCLEOTIDE SEQUENCE [LARGE SCALE GENOMIC DNA]</scope>
    <source>
        <strain>ATCC 8585 / CBS 2359 / DSM 70799 / NBRC 1267 / NRRL Y-1140 / WM37</strain>
    </source>
</reference>
<gene>
    <name type="primary">TRM6</name>
    <name type="ordered locus">KLLA0F03377g</name>
</gene>
<accession>Q6CLF6</accession>
<feature type="chain" id="PRO_0000256164" description="tRNA (adenine(58)-N(1))-methyltransferase non-catalytic subunit TRM6">
    <location>
        <begin position="1"/>
        <end position="476"/>
    </location>
</feature>
<feature type="region of interest" description="Disordered" evidence="2">
    <location>
        <begin position="433"/>
        <end position="476"/>
    </location>
</feature>
<comment type="function">
    <text evidence="1">Substrate-binding subunit of tRNA (adenine-N(1)-)-methyltransferase, which catalyzes the formation of N(1)-methyladenine at position 58 (m1A58) in initiator methionyl-tRNA.</text>
</comment>
<comment type="subunit">
    <text evidence="1">Heterotetramer; composed of two copies of TRM6 and two copies of TRM61.</text>
</comment>
<comment type="subcellular location">
    <subcellularLocation>
        <location evidence="1">Nucleus</location>
    </subcellularLocation>
</comment>
<comment type="similarity">
    <text evidence="3">Belongs to the TRM6/GCD10 family.</text>
</comment>
<organism>
    <name type="scientific">Kluyveromyces lactis (strain ATCC 8585 / CBS 2359 / DSM 70799 / NBRC 1267 / NRRL Y-1140 / WM37)</name>
    <name type="common">Yeast</name>
    <name type="synonym">Candida sphaerica</name>
    <dbReference type="NCBI Taxonomy" id="284590"/>
    <lineage>
        <taxon>Eukaryota</taxon>
        <taxon>Fungi</taxon>
        <taxon>Dikarya</taxon>
        <taxon>Ascomycota</taxon>
        <taxon>Saccharomycotina</taxon>
        <taxon>Saccharomycetes</taxon>
        <taxon>Saccharomycetales</taxon>
        <taxon>Saccharomycetaceae</taxon>
        <taxon>Kluyveromyces</taxon>
    </lineage>
</organism>
<proteinExistence type="inferred from homology"/>
<name>TRM6_KLULA</name>
<dbReference type="EMBL" id="CR382126">
    <property type="protein sequence ID" value="CAG97941.1"/>
    <property type="molecule type" value="Genomic_DNA"/>
</dbReference>
<dbReference type="RefSeq" id="XP_455233.1">
    <property type="nucleotide sequence ID" value="XM_455233.1"/>
</dbReference>
<dbReference type="SMR" id="Q6CLF6"/>
<dbReference type="FunCoup" id="Q6CLF6">
    <property type="interactions" value="997"/>
</dbReference>
<dbReference type="STRING" id="284590.Q6CLF6"/>
<dbReference type="PaxDb" id="284590-Q6CLF6"/>
<dbReference type="KEGG" id="kla:KLLA0_F03377g"/>
<dbReference type="eggNOG" id="KOG1416">
    <property type="taxonomic scope" value="Eukaryota"/>
</dbReference>
<dbReference type="HOGENOM" id="CLU_010916_2_0_1"/>
<dbReference type="InParanoid" id="Q6CLF6"/>
<dbReference type="OMA" id="TRCRPYQ"/>
<dbReference type="Proteomes" id="UP000000598">
    <property type="component" value="Chromosome F"/>
</dbReference>
<dbReference type="GO" id="GO:0005634">
    <property type="term" value="C:nucleus"/>
    <property type="evidence" value="ECO:0007669"/>
    <property type="project" value="UniProtKB-SubCell"/>
</dbReference>
<dbReference type="GO" id="GO:0031515">
    <property type="term" value="C:tRNA (m1A) methyltransferase complex"/>
    <property type="evidence" value="ECO:0007669"/>
    <property type="project" value="InterPro"/>
</dbReference>
<dbReference type="GO" id="GO:0003723">
    <property type="term" value="F:RNA binding"/>
    <property type="evidence" value="ECO:0007669"/>
    <property type="project" value="UniProtKB-KW"/>
</dbReference>
<dbReference type="GO" id="GO:0030488">
    <property type="term" value="P:tRNA methylation"/>
    <property type="evidence" value="ECO:0007669"/>
    <property type="project" value="InterPro"/>
</dbReference>
<dbReference type="Gene3D" id="3.10.330.20">
    <property type="match status" value="1"/>
</dbReference>
<dbReference type="InterPro" id="IPR017423">
    <property type="entry name" value="TRM6"/>
</dbReference>
<dbReference type="PANTHER" id="PTHR12945">
    <property type="entry name" value="TRANSLATION INITIATION FACTOR EIF3-RELATED"/>
    <property type="match status" value="1"/>
</dbReference>
<dbReference type="PANTHER" id="PTHR12945:SF0">
    <property type="entry name" value="TRNA (ADENINE(58)-N(1))-METHYLTRANSFERASE NON-CATALYTIC SUBUNIT TRM6"/>
    <property type="match status" value="1"/>
</dbReference>
<dbReference type="Pfam" id="PF04189">
    <property type="entry name" value="Gcd10p"/>
    <property type="match status" value="1"/>
</dbReference>
<dbReference type="PIRSF" id="PIRSF038170">
    <property type="entry name" value="tRNA_m1A_mtfrase"/>
    <property type="match status" value="1"/>
</dbReference>